<sequence length="660" mass="75885">MEEKFVLHSPFAPSGDQPEAIKALVDGIDEKKEHQVLLGVTGSGKTFTIANVIAQLNRPSLIISHNKTLASQLYSELKALFPDNRVEYFVSYFDFYKPEAYIPKSDLYIEKTSKNNKELEAMRMSAINALSIRKDTIVVASVAAIYGESNPKHYRQNFFPIEVGMQIDRKSLLLKLSQIGYERNRMELNKGQFDVKGDSIEICPGYVSDTNIRIDMFGNEIEAITLIDPLSKNVEGSRKNMTLFPATTYTVHENTIQNTVDLIKQELSERIEYFKSHDKLLEAQRIKDRTLNDLDSLLEFGYTSGIENYSRYLDGRAPGQRPYTLFDYLPDDSVIFIDESHLMIPQLHGMHNGDRARKLSLVEYGFRLPSALDNRPLRFEEFAEFKFPKIYISATPGDYELDLTHGEIVTQYIRPTGLLDPIIEIHSRDNQIEDIYDHLKEQIAKKERTLILTTTKKNAEELSLFLQEKKIKSAYIHDRFKIFERNEILKGLRMGKFDVVVGINLLKEGIDLPEVSLICVLNADSTGLMRDTRSLIQIVGRAARNDHGKVIFYANEITSSMRECIEDNLFKRKIQSEYNEKHNIIPKTIVKPIAPPIQNGILSEDHSKYYGEKDLSQMKHNKKFIDQMVRKMTQLAKANKFEEAIEIRDYLIEIGIELDK</sequence>
<organism>
    <name type="scientific">Mycoplasmopsis pulmonis</name>
    <name type="common">Mycoplasma pulmonis</name>
    <dbReference type="NCBI Taxonomy" id="2107"/>
    <lineage>
        <taxon>Bacteria</taxon>
        <taxon>Bacillati</taxon>
        <taxon>Mycoplasmatota</taxon>
        <taxon>Mycoplasmoidales</taxon>
        <taxon>Metamycoplasmataceae</taxon>
        <taxon>Mycoplasmopsis</taxon>
    </lineage>
</organism>
<keyword id="KW-0067">ATP-binding</keyword>
<keyword id="KW-0963">Cytoplasm</keyword>
<keyword id="KW-0227">DNA damage</keyword>
<keyword id="KW-0228">DNA excision</keyword>
<keyword id="KW-0234">DNA repair</keyword>
<keyword id="KW-0267">Excision nuclease</keyword>
<keyword id="KW-0547">Nucleotide-binding</keyword>
<keyword id="KW-0742">SOS response</keyword>
<accession>Q9ZB21</accession>
<gene>
    <name evidence="1" type="primary">uvrB</name>
</gene>
<comment type="function">
    <text evidence="1">The UvrABC repair system catalyzes the recognition and processing of DNA lesions. A damage recognition complex composed of 2 UvrA and 2 UvrB subunits scans DNA for abnormalities. Upon binding of the UvrA(2)B(2) complex to a putative damaged site, the DNA wraps around one UvrB monomer. DNA wrap is dependent on ATP binding by UvrB and probably causes local melting of the DNA helix, facilitating insertion of UvrB beta-hairpin between the DNA strands. Then UvrB probes one DNA strand for the presence of a lesion. If a lesion is found the UvrA subunits dissociate and the UvrB-DNA preincision complex is formed. This complex is subsequently bound by UvrC and the second UvrB is released. If no lesion is found, the DNA wraps around the other UvrB subunit that will check the other stand for damage.</text>
</comment>
<comment type="subunit">
    <text evidence="1">Forms a heterotetramer with UvrA during the search for lesions. Interacts with UvrC in an incision complex.</text>
</comment>
<comment type="subcellular location">
    <subcellularLocation>
        <location evidence="1">Cytoplasm</location>
    </subcellularLocation>
</comment>
<comment type="domain">
    <text evidence="1">The beta-hairpin motif is involved in DNA binding.</text>
</comment>
<comment type="similarity">
    <text evidence="1">Belongs to the UvrB family.</text>
</comment>
<dbReference type="EMBL" id="U59874">
    <property type="protein sequence ID" value="AAD00088.1"/>
    <property type="molecule type" value="Genomic_DNA"/>
</dbReference>
<dbReference type="SMR" id="Q9ZB21"/>
<dbReference type="GO" id="GO:0005737">
    <property type="term" value="C:cytoplasm"/>
    <property type="evidence" value="ECO:0007669"/>
    <property type="project" value="UniProtKB-SubCell"/>
</dbReference>
<dbReference type="GO" id="GO:0009380">
    <property type="term" value="C:excinuclease repair complex"/>
    <property type="evidence" value="ECO:0007669"/>
    <property type="project" value="InterPro"/>
</dbReference>
<dbReference type="GO" id="GO:0005524">
    <property type="term" value="F:ATP binding"/>
    <property type="evidence" value="ECO:0007669"/>
    <property type="project" value="UniProtKB-UniRule"/>
</dbReference>
<dbReference type="GO" id="GO:0016887">
    <property type="term" value="F:ATP hydrolysis activity"/>
    <property type="evidence" value="ECO:0007669"/>
    <property type="project" value="InterPro"/>
</dbReference>
<dbReference type="GO" id="GO:0003677">
    <property type="term" value="F:DNA binding"/>
    <property type="evidence" value="ECO:0007669"/>
    <property type="project" value="UniProtKB-UniRule"/>
</dbReference>
<dbReference type="GO" id="GO:0009381">
    <property type="term" value="F:excinuclease ABC activity"/>
    <property type="evidence" value="ECO:0007669"/>
    <property type="project" value="UniProtKB-UniRule"/>
</dbReference>
<dbReference type="GO" id="GO:0006289">
    <property type="term" value="P:nucleotide-excision repair"/>
    <property type="evidence" value="ECO:0007669"/>
    <property type="project" value="UniProtKB-UniRule"/>
</dbReference>
<dbReference type="GO" id="GO:0009432">
    <property type="term" value="P:SOS response"/>
    <property type="evidence" value="ECO:0007669"/>
    <property type="project" value="UniProtKB-UniRule"/>
</dbReference>
<dbReference type="CDD" id="cd17916">
    <property type="entry name" value="DEXHc_UvrB"/>
    <property type="match status" value="1"/>
</dbReference>
<dbReference type="Gene3D" id="3.40.50.300">
    <property type="entry name" value="P-loop containing nucleotide triphosphate hydrolases"/>
    <property type="match status" value="3"/>
</dbReference>
<dbReference type="HAMAP" id="MF_00204">
    <property type="entry name" value="UvrB"/>
    <property type="match status" value="1"/>
</dbReference>
<dbReference type="InterPro" id="IPR006935">
    <property type="entry name" value="Helicase/UvrB_N"/>
</dbReference>
<dbReference type="InterPro" id="IPR014001">
    <property type="entry name" value="Helicase_ATP-bd"/>
</dbReference>
<dbReference type="InterPro" id="IPR001650">
    <property type="entry name" value="Helicase_C-like"/>
</dbReference>
<dbReference type="InterPro" id="IPR027417">
    <property type="entry name" value="P-loop_NTPase"/>
</dbReference>
<dbReference type="InterPro" id="IPR001943">
    <property type="entry name" value="UVR_dom"/>
</dbReference>
<dbReference type="InterPro" id="IPR036876">
    <property type="entry name" value="UVR_dom_sf"/>
</dbReference>
<dbReference type="InterPro" id="IPR004807">
    <property type="entry name" value="UvrB"/>
</dbReference>
<dbReference type="InterPro" id="IPR041471">
    <property type="entry name" value="UvrB_inter"/>
</dbReference>
<dbReference type="InterPro" id="IPR024759">
    <property type="entry name" value="UvrB_YAD/RRR_dom"/>
</dbReference>
<dbReference type="NCBIfam" id="NF003673">
    <property type="entry name" value="PRK05298.1"/>
    <property type="match status" value="1"/>
</dbReference>
<dbReference type="NCBIfam" id="TIGR00631">
    <property type="entry name" value="uvrb"/>
    <property type="match status" value="1"/>
</dbReference>
<dbReference type="PANTHER" id="PTHR24029">
    <property type="entry name" value="UVRABC SYSTEM PROTEIN B"/>
    <property type="match status" value="1"/>
</dbReference>
<dbReference type="PANTHER" id="PTHR24029:SF0">
    <property type="entry name" value="UVRABC SYSTEM PROTEIN B"/>
    <property type="match status" value="1"/>
</dbReference>
<dbReference type="Pfam" id="PF00271">
    <property type="entry name" value="Helicase_C"/>
    <property type="match status" value="1"/>
</dbReference>
<dbReference type="Pfam" id="PF04851">
    <property type="entry name" value="ResIII"/>
    <property type="match status" value="1"/>
</dbReference>
<dbReference type="Pfam" id="PF02151">
    <property type="entry name" value="UVR"/>
    <property type="match status" value="1"/>
</dbReference>
<dbReference type="Pfam" id="PF12344">
    <property type="entry name" value="UvrB"/>
    <property type="match status" value="1"/>
</dbReference>
<dbReference type="Pfam" id="PF17757">
    <property type="entry name" value="UvrB_inter"/>
    <property type="match status" value="1"/>
</dbReference>
<dbReference type="SMART" id="SM00487">
    <property type="entry name" value="DEXDc"/>
    <property type="match status" value="1"/>
</dbReference>
<dbReference type="SMART" id="SM00490">
    <property type="entry name" value="HELICc"/>
    <property type="match status" value="1"/>
</dbReference>
<dbReference type="SUPFAM" id="SSF46600">
    <property type="entry name" value="C-terminal UvrC-binding domain of UvrB"/>
    <property type="match status" value="1"/>
</dbReference>
<dbReference type="SUPFAM" id="SSF52540">
    <property type="entry name" value="P-loop containing nucleoside triphosphate hydrolases"/>
    <property type="match status" value="2"/>
</dbReference>
<dbReference type="PROSITE" id="PS51192">
    <property type="entry name" value="HELICASE_ATP_BIND_1"/>
    <property type="match status" value="1"/>
</dbReference>
<dbReference type="PROSITE" id="PS51194">
    <property type="entry name" value="HELICASE_CTER"/>
    <property type="match status" value="1"/>
</dbReference>
<dbReference type="PROSITE" id="PS50151">
    <property type="entry name" value="UVR"/>
    <property type="match status" value="1"/>
</dbReference>
<name>UVRB_MYCPL</name>
<reference key="1">
    <citation type="submission" date="1996-06" db="EMBL/GenBank/DDBJ databases">
        <title>Molecular analysis of the uvrB homologue in Mycoplasma pulmonis.</title>
        <authorList>
            <person name="Minion F.C."/>
            <person name="Jarvill-Taylor K.J."/>
        </authorList>
    </citation>
    <scope>NUCLEOTIDE SEQUENCE [GENOMIC DNA]</scope>
    <source>
        <strain>X1048</strain>
    </source>
</reference>
<proteinExistence type="inferred from homology"/>
<protein>
    <recommendedName>
        <fullName evidence="1">UvrABC system protein B</fullName>
        <shortName evidence="1">Protein UvrB</shortName>
    </recommendedName>
    <alternativeName>
        <fullName evidence="1">Excinuclease ABC subunit B</fullName>
    </alternativeName>
</protein>
<feature type="chain" id="PRO_0000138411" description="UvrABC system protein B">
    <location>
        <begin position="1"/>
        <end position="660"/>
    </location>
</feature>
<feature type="domain" description="Helicase ATP-binding" evidence="1">
    <location>
        <begin position="26"/>
        <end position="414"/>
    </location>
</feature>
<feature type="domain" description="Helicase C-terminal" evidence="1">
    <location>
        <begin position="431"/>
        <end position="593"/>
    </location>
</feature>
<feature type="domain" description="UVR" evidence="1">
    <location>
        <begin position="622"/>
        <end position="657"/>
    </location>
</feature>
<feature type="short sequence motif" description="Beta-hairpin">
    <location>
        <begin position="92"/>
        <end position="115"/>
    </location>
</feature>
<feature type="binding site" evidence="1">
    <location>
        <begin position="39"/>
        <end position="46"/>
    </location>
    <ligand>
        <name>ATP</name>
        <dbReference type="ChEBI" id="CHEBI:30616"/>
    </ligand>
</feature>
<evidence type="ECO:0000255" key="1">
    <source>
        <dbReference type="HAMAP-Rule" id="MF_00204"/>
    </source>
</evidence>